<reference key="1">
    <citation type="journal article" date="2003" name="Proc. Natl. Acad. Sci. U.S.A.">
        <title>Complete genome sequence of the Q-fever pathogen, Coxiella burnetii.</title>
        <authorList>
            <person name="Seshadri R."/>
            <person name="Paulsen I.T."/>
            <person name="Eisen J.A."/>
            <person name="Read T.D."/>
            <person name="Nelson K.E."/>
            <person name="Nelson W.C."/>
            <person name="Ward N.L."/>
            <person name="Tettelin H."/>
            <person name="Davidsen T.M."/>
            <person name="Beanan M.J."/>
            <person name="DeBoy R.T."/>
            <person name="Daugherty S.C."/>
            <person name="Brinkac L.M."/>
            <person name="Madupu R."/>
            <person name="Dodson R.J."/>
            <person name="Khouri H.M."/>
            <person name="Lee K.H."/>
            <person name="Carty H.A."/>
            <person name="Scanlan D."/>
            <person name="Heinzen R.A."/>
            <person name="Thompson H.A."/>
            <person name="Samuel J.E."/>
            <person name="Fraser C.M."/>
            <person name="Heidelberg J.F."/>
        </authorList>
    </citation>
    <scope>NUCLEOTIDE SEQUENCE [LARGE SCALE GENOMIC DNA]</scope>
    <source>
        <strain>RSA 493 / Nine Mile phase I</strain>
    </source>
</reference>
<accession>Q820B5</accession>
<feature type="chain" id="PRO_0000193378" description="Ubiquinone biosynthesis O-methyltransferase">
    <location>
        <begin position="1"/>
        <end position="234"/>
    </location>
</feature>
<feature type="binding site" evidence="1">
    <location>
        <position position="40"/>
    </location>
    <ligand>
        <name>S-adenosyl-L-methionine</name>
        <dbReference type="ChEBI" id="CHEBI:59789"/>
    </ligand>
</feature>
<feature type="binding site" evidence="1">
    <location>
        <position position="59"/>
    </location>
    <ligand>
        <name>S-adenosyl-L-methionine</name>
        <dbReference type="ChEBI" id="CHEBI:59789"/>
    </ligand>
</feature>
<feature type="binding site" evidence="1">
    <location>
        <position position="80"/>
    </location>
    <ligand>
        <name>S-adenosyl-L-methionine</name>
        <dbReference type="ChEBI" id="CHEBI:59789"/>
    </ligand>
</feature>
<feature type="binding site" evidence="1">
    <location>
        <position position="123"/>
    </location>
    <ligand>
        <name>S-adenosyl-L-methionine</name>
        <dbReference type="ChEBI" id="CHEBI:59789"/>
    </ligand>
</feature>
<keyword id="KW-0489">Methyltransferase</keyword>
<keyword id="KW-1185">Reference proteome</keyword>
<keyword id="KW-0949">S-adenosyl-L-methionine</keyword>
<keyword id="KW-0808">Transferase</keyword>
<keyword id="KW-0831">Ubiquinone biosynthesis</keyword>
<proteinExistence type="inferred from homology"/>
<organism>
    <name type="scientific">Coxiella burnetii (strain RSA 493 / Nine Mile phase I)</name>
    <dbReference type="NCBI Taxonomy" id="227377"/>
    <lineage>
        <taxon>Bacteria</taxon>
        <taxon>Pseudomonadati</taxon>
        <taxon>Pseudomonadota</taxon>
        <taxon>Gammaproteobacteria</taxon>
        <taxon>Legionellales</taxon>
        <taxon>Coxiellaceae</taxon>
        <taxon>Coxiella</taxon>
    </lineage>
</organism>
<dbReference type="EC" id="2.1.1.222" evidence="1"/>
<dbReference type="EC" id="2.1.1.64" evidence="1"/>
<dbReference type="EMBL" id="AE016828">
    <property type="protein sequence ID" value="AAO89905.1"/>
    <property type="molecule type" value="Genomic_DNA"/>
</dbReference>
<dbReference type="RefSeq" id="NP_819391.1">
    <property type="nucleotide sequence ID" value="NC_002971.4"/>
</dbReference>
<dbReference type="RefSeq" id="WP_010957522.1">
    <property type="nucleotide sequence ID" value="NZ_CCYB01000057.1"/>
</dbReference>
<dbReference type="SMR" id="Q820B5"/>
<dbReference type="STRING" id="227377.CBU_0350"/>
<dbReference type="EnsemblBacteria" id="AAO89905">
    <property type="protein sequence ID" value="AAO89905"/>
    <property type="gene ID" value="CBU_0350"/>
</dbReference>
<dbReference type="GeneID" id="1208232"/>
<dbReference type="KEGG" id="cbu:CBU_0350"/>
<dbReference type="PATRIC" id="fig|227377.7.peg.343"/>
<dbReference type="eggNOG" id="COG2227">
    <property type="taxonomic scope" value="Bacteria"/>
</dbReference>
<dbReference type="HOGENOM" id="CLU_042432_5_0_6"/>
<dbReference type="OrthoDB" id="9801538at2"/>
<dbReference type="UniPathway" id="UPA00232"/>
<dbReference type="Proteomes" id="UP000002671">
    <property type="component" value="Chromosome"/>
</dbReference>
<dbReference type="GO" id="GO:0102208">
    <property type="term" value="F:2-polyprenyl-6-hydroxyphenol methylase activity"/>
    <property type="evidence" value="ECO:0007669"/>
    <property type="project" value="UniProtKB-EC"/>
</dbReference>
<dbReference type="GO" id="GO:0061542">
    <property type="term" value="F:3-demethylubiquinol 3-O-methyltransferase activity"/>
    <property type="evidence" value="ECO:0007669"/>
    <property type="project" value="UniProtKB-UniRule"/>
</dbReference>
<dbReference type="GO" id="GO:0008168">
    <property type="term" value="F:methyltransferase activity"/>
    <property type="evidence" value="ECO:0000318"/>
    <property type="project" value="GO_Central"/>
</dbReference>
<dbReference type="GO" id="GO:0010420">
    <property type="term" value="F:polyprenyldihydroxybenzoate methyltransferase activity"/>
    <property type="evidence" value="ECO:0007669"/>
    <property type="project" value="InterPro"/>
</dbReference>
<dbReference type="GO" id="GO:0032259">
    <property type="term" value="P:methylation"/>
    <property type="evidence" value="ECO:0007669"/>
    <property type="project" value="UniProtKB-KW"/>
</dbReference>
<dbReference type="CDD" id="cd02440">
    <property type="entry name" value="AdoMet_MTases"/>
    <property type="match status" value="1"/>
</dbReference>
<dbReference type="FunFam" id="3.40.50.150:FF:000028">
    <property type="entry name" value="Ubiquinone biosynthesis O-methyltransferase"/>
    <property type="match status" value="1"/>
</dbReference>
<dbReference type="Gene3D" id="3.40.50.150">
    <property type="entry name" value="Vaccinia Virus protein VP39"/>
    <property type="match status" value="1"/>
</dbReference>
<dbReference type="HAMAP" id="MF_00472">
    <property type="entry name" value="UbiG"/>
    <property type="match status" value="1"/>
</dbReference>
<dbReference type="InterPro" id="IPR029063">
    <property type="entry name" value="SAM-dependent_MTases_sf"/>
</dbReference>
<dbReference type="InterPro" id="IPR010233">
    <property type="entry name" value="UbiG_MeTrfase"/>
</dbReference>
<dbReference type="NCBIfam" id="TIGR01983">
    <property type="entry name" value="UbiG"/>
    <property type="match status" value="1"/>
</dbReference>
<dbReference type="PANTHER" id="PTHR43464">
    <property type="entry name" value="METHYLTRANSFERASE"/>
    <property type="match status" value="1"/>
</dbReference>
<dbReference type="PANTHER" id="PTHR43464:SF19">
    <property type="entry name" value="UBIQUINONE BIOSYNTHESIS O-METHYLTRANSFERASE, MITOCHONDRIAL"/>
    <property type="match status" value="1"/>
</dbReference>
<dbReference type="Pfam" id="PF13489">
    <property type="entry name" value="Methyltransf_23"/>
    <property type="match status" value="1"/>
</dbReference>
<dbReference type="SUPFAM" id="SSF53335">
    <property type="entry name" value="S-adenosyl-L-methionine-dependent methyltransferases"/>
    <property type="match status" value="1"/>
</dbReference>
<sequence length="234" mass="26485">MTLSEQNIDKEELAKFSDLAQDWWNPAGKMKPLHLINPVRLKYIEQQITLKGKHVLDVGCGGGLLSEALAKHGAIVTGVDMSESLIDVAKNHAEQQQLNINYQCQDIEILTKDAQRFDIITCMELLEHVPDPQRMIKNCAALIKPGGKLFFSTINRNFKAYLYTIVGAEYVFNLLPKGTHDYAQFIRPSELTQWAESGGLRLLDITGIHYHPLKNEFDLSRDVSVNYLACFTHE</sequence>
<evidence type="ECO:0000255" key="1">
    <source>
        <dbReference type="HAMAP-Rule" id="MF_00472"/>
    </source>
</evidence>
<gene>
    <name evidence="1" type="primary">ubiG</name>
    <name type="ordered locus">CBU_0350</name>
</gene>
<name>UBIG_COXBU</name>
<protein>
    <recommendedName>
        <fullName evidence="1">Ubiquinone biosynthesis O-methyltransferase</fullName>
    </recommendedName>
    <alternativeName>
        <fullName evidence="1">2-polyprenyl-6-hydroxyphenol methylase</fullName>
        <ecNumber evidence="1">2.1.1.222</ecNumber>
    </alternativeName>
    <alternativeName>
        <fullName evidence="1">3-demethylubiquinone 3-O-methyltransferase</fullName>
        <ecNumber evidence="1">2.1.1.64</ecNumber>
    </alternativeName>
</protein>
<comment type="function">
    <text evidence="1">O-methyltransferase that catalyzes the 2 O-methylation steps in the ubiquinone biosynthetic pathway.</text>
</comment>
<comment type="catalytic activity">
    <reaction evidence="1">
        <text>a 3-demethylubiquinol + S-adenosyl-L-methionine = a ubiquinol + S-adenosyl-L-homocysteine + H(+)</text>
        <dbReference type="Rhea" id="RHEA:44380"/>
        <dbReference type="Rhea" id="RHEA-COMP:9566"/>
        <dbReference type="Rhea" id="RHEA-COMP:10914"/>
        <dbReference type="ChEBI" id="CHEBI:15378"/>
        <dbReference type="ChEBI" id="CHEBI:17976"/>
        <dbReference type="ChEBI" id="CHEBI:57856"/>
        <dbReference type="ChEBI" id="CHEBI:59789"/>
        <dbReference type="ChEBI" id="CHEBI:84422"/>
        <dbReference type="EC" id="2.1.1.64"/>
    </reaction>
</comment>
<comment type="catalytic activity">
    <reaction evidence="1">
        <text>a 3-(all-trans-polyprenyl)benzene-1,2-diol + S-adenosyl-L-methionine = a 2-methoxy-6-(all-trans-polyprenyl)phenol + S-adenosyl-L-homocysteine + H(+)</text>
        <dbReference type="Rhea" id="RHEA:31411"/>
        <dbReference type="Rhea" id="RHEA-COMP:9550"/>
        <dbReference type="Rhea" id="RHEA-COMP:9551"/>
        <dbReference type="ChEBI" id="CHEBI:15378"/>
        <dbReference type="ChEBI" id="CHEBI:57856"/>
        <dbReference type="ChEBI" id="CHEBI:59789"/>
        <dbReference type="ChEBI" id="CHEBI:62729"/>
        <dbReference type="ChEBI" id="CHEBI:62731"/>
        <dbReference type="EC" id="2.1.1.222"/>
    </reaction>
</comment>
<comment type="pathway">
    <text evidence="1">Cofactor biosynthesis; ubiquinone biosynthesis.</text>
</comment>
<comment type="similarity">
    <text evidence="1">Belongs to the methyltransferase superfamily. UbiG/COQ3 family.</text>
</comment>